<sequence length="194" mass="20836">MRLILLGPPGAGKGTQAGLLTKKHGIPQLSTGDMLRAAVAQQSEIGKRAKAVMDAGQLVSDEIVNQIVSERIDAPDCANGFILDGYPRTVPQAQALSQMLSGKGLKLDAVIELKVDENALVKRMESRVAETIAKGGQVRSDDNPEAFRKRLVEYREKTAPLSSYYAGTGELRVINGMAPVEEVTAEIERILVPA</sequence>
<keyword id="KW-0067">ATP-binding</keyword>
<keyword id="KW-0963">Cytoplasm</keyword>
<keyword id="KW-0418">Kinase</keyword>
<keyword id="KW-0545">Nucleotide biosynthesis</keyword>
<keyword id="KW-0547">Nucleotide-binding</keyword>
<keyword id="KW-0808">Transferase</keyword>
<protein>
    <recommendedName>
        <fullName evidence="1">Adenylate kinase</fullName>
        <shortName evidence="1">AK</shortName>
        <ecNumber evidence="1">2.7.4.3</ecNumber>
    </recommendedName>
    <alternativeName>
        <fullName evidence="1">ATP-AMP transphosphorylase</fullName>
    </alternativeName>
    <alternativeName>
        <fullName evidence="1">ATP:AMP phosphotransferase</fullName>
    </alternativeName>
    <alternativeName>
        <fullName evidence="1">Adenylate monophosphate kinase</fullName>
    </alternativeName>
</protein>
<evidence type="ECO:0000255" key="1">
    <source>
        <dbReference type="HAMAP-Rule" id="MF_00235"/>
    </source>
</evidence>
<feature type="chain" id="PRO_0000158742" description="Adenylate kinase">
    <location>
        <begin position="1"/>
        <end position="194"/>
    </location>
</feature>
<feature type="region of interest" description="NMP" evidence="1">
    <location>
        <begin position="30"/>
        <end position="59"/>
    </location>
</feature>
<feature type="region of interest" description="LID" evidence="1">
    <location>
        <begin position="126"/>
        <end position="142"/>
    </location>
</feature>
<feature type="binding site" evidence="1">
    <location>
        <begin position="10"/>
        <end position="15"/>
    </location>
    <ligand>
        <name>ATP</name>
        <dbReference type="ChEBI" id="CHEBI:30616"/>
    </ligand>
</feature>
<feature type="binding site" evidence="1">
    <location>
        <position position="31"/>
    </location>
    <ligand>
        <name>AMP</name>
        <dbReference type="ChEBI" id="CHEBI:456215"/>
    </ligand>
</feature>
<feature type="binding site" evidence="1">
    <location>
        <position position="36"/>
    </location>
    <ligand>
        <name>AMP</name>
        <dbReference type="ChEBI" id="CHEBI:456215"/>
    </ligand>
</feature>
<feature type="binding site" evidence="1">
    <location>
        <begin position="57"/>
        <end position="59"/>
    </location>
    <ligand>
        <name>AMP</name>
        <dbReference type="ChEBI" id="CHEBI:456215"/>
    </ligand>
</feature>
<feature type="binding site" evidence="1">
    <location>
        <begin position="85"/>
        <end position="88"/>
    </location>
    <ligand>
        <name>AMP</name>
        <dbReference type="ChEBI" id="CHEBI:456215"/>
    </ligand>
</feature>
<feature type="binding site" evidence="1">
    <location>
        <position position="92"/>
    </location>
    <ligand>
        <name>AMP</name>
        <dbReference type="ChEBI" id="CHEBI:456215"/>
    </ligand>
</feature>
<feature type="binding site" evidence="1">
    <location>
        <position position="127"/>
    </location>
    <ligand>
        <name>ATP</name>
        <dbReference type="ChEBI" id="CHEBI:30616"/>
    </ligand>
</feature>
<feature type="binding site" evidence="1">
    <location>
        <position position="139"/>
    </location>
    <ligand>
        <name>AMP</name>
        <dbReference type="ChEBI" id="CHEBI:456215"/>
    </ligand>
</feature>
<feature type="binding site" evidence="1">
    <location>
        <position position="150"/>
    </location>
    <ligand>
        <name>AMP</name>
        <dbReference type="ChEBI" id="CHEBI:456215"/>
    </ligand>
</feature>
<feature type="binding site" evidence="1">
    <location>
        <position position="178"/>
    </location>
    <ligand>
        <name>ATP</name>
        <dbReference type="ChEBI" id="CHEBI:30616"/>
    </ligand>
</feature>
<comment type="function">
    <text evidence="1">Catalyzes the reversible transfer of the terminal phosphate group between ATP and AMP. Plays an important role in cellular energy homeostasis and in adenine nucleotide metabolism.</text>
</comment>
<comment type="catalytic activity">
    <reaction evidence="1">
        <text>AMP + ATP = 2 ADP</text>
        <dbReference type="Rhea" id="RHEA:12973"/>
        <dbReference type="ChEBI" id="CHEBI:30616"/>
        <dbReference type="ChEBI" id="CHEBI:456215"/>
        <dbReference type="ChEBI" id="CHEBI:456216"/>
        <dbReference type="EC" id="2.7.4.3"/>
    </reaction>
</comment>
<comment type="pathway">
    <text evidence="1">Purine metabolism; AMP biosynthesis via salvage pathway; AMP from ADP: step 1/1.</text>
</comment>
<comment type="subunit">
    <text evidence="1">Monomer.</text>
</comment>
<comment type="subcellular location">
    <subcellularLocation>
        <location evidence="1">Cytoplasm</location>
    </subcellularLocation>
</comment>
<comment type="domain">
    <text evidence="1">Consists of three domains, a large central CORE domain and two small peripheral domains, NMPbind and LID, which undergo movements during catalysis. The LID domain closes over the site of phosphoryl transfer upon ATP binding. Assembling and dissambling the active center during each catalytic cycle provides an effective means to prevent ATP hydrolysis.</text>
</comment>
<comment type="similarity">
    <text evidence="1">Belongs to the adenylate kinase family.</text>
</comment>
<gene>
    <name evidence="1" type="primary">adk</name>
    <name type="ordered locus">BR1212</name>
    <name type="ordered locus">BS1330_I1208</name>
</gene>
<organism>
    <name type="scientific">Brucella suis biovar 1 (strain 1330)</name>
    <dbReference type="NCBI Taxonomy" id="204722"/>
    <lineage>
        <taxon>Bacteria</taxon>
        <taxon>Pseudomonadati</taxon>
        <taxon>Pseudomonadota</taxon>
        <taxon>Alphaproteobacteria</taxon>
        <taxon>Hyphomicrobiales</taxon>
        <taxon>Brucellaceae</taxon>
        <taxon>Brucella/Ochrobactrum group</taxon>
        <taxon>Brucella</taxon>
    </lineage>
</organism>
<reference key="1">
    <citation type="journal article" date="2002" name="Proc. Natl. Acad. Sci. U.S.A.">
        <title>The Brucella suis genome reveals fundamental similarities between animal and plant pathogens and symbionts.</title>
        <authorList>
            <person name="Paulsen I.T."/>
            <person name="Seshadri R."/>
            <person name="Nelson K.E."/>
            <person name="Eisen J.A."/>
            <person name="Heidelberg J.F."/>
            <person name="Read T.D."/>
            <person name="Dodson R.J."/>
            <person name="Umayam L.A."/>
            <person name="Brinkac L.M."/>
            <person name="Beanan M.J."/>
            <person name="Daugherty S.C."/>
            <person name="DeBoy R.T."/>
            <person name="Durkin A.S."/>
            <person name="Kolonay J.F."/>
            <person name="Madupu R."/>
            <person name="Nelson W.C."/>
            <person name="Ayodeji B."/>
            <person name="Kraul M."/>
            <person name="Shetty J."/>
            <person name="Malek J.A."/>
            <person name="Van Aken S.E."/>
            <person name="Riedmuller S."/>
            <person name="Tettelin H."/>
            <person name="Gill S.R."/>
            <person name="White O."/>
            <person name="Salzberg S.L."/>
            <person name="Hoover D.L."/>
            <person name="Lindler L.E."/>
            <person name="Halling S.M."/>
            <person name="Boyle S.M."/>
            <person name="Fraser C.M."/>
        </authorList>
    </citation>
    <scope>NUCLEOTIDE SEQUENCE [LARGE SCALE GENOMIC DNA]</scope>
    <source>
        <strain>1330</strain>
    </source>
</reference>
<reference key="2">
    <citation type="journal article" date="2011" name="J. Bacteriol.">
        <title>Revised genome sequence of Brucella suis 1330.</title>
        <authorList>
            <person name="Tae H."/>
            <person name="Shallom S."/>
            <person name="Settlage R."/>
            <person name="Preston D."/>
            <person name="Adams L.G."/>
            <person name="Garner H.R."/>
        </authorList>
    </citation>
    <scope>NUCLEOTIDE SEQUENCE [LARGE SCALE GENOMIC DNA]</scope>
    <source>
        <strain>1330</strain>
    </source>
</reference>
<name>KAD_BRUSU</name>
<accession>Q8G092</accession>
<accession>G0KAD3</accession>
<dbReference type="EC" id="2.7.4.3" evidence="1"/>
<dbReference type="EMBL" id="AE014291">
    <property type="protein sequence ID" value="AAN30131.1"/>
    <property type="molecule type" value="Genomic_DNA"/>
</dbReference>
<dbReference type="EMBL" id="CP002997">
    <property type="protein sequence ID" value="AEM18549.1"/>
    <property type="molecule type" value="Genomic_DNA"/>
</dbReference>
<dbReference type="RefSeq" id="WP_004689762.1">
    <property type="nucleotide sequence ID" value="NZ_KN046804.1"/>
</dbReference>
<dbReference type="SMR" id="Q8G092"/>
<dbReference type="KEGG" id="bms:BR1212"/>
<dbReference type="KEGG" id="bsi:BS1330_I1208"/>
<dbReference type="PATRIC" id="fig|204722.21.peg.2264"/>
<dbReference type="HOGENOM" id="CLU_032354_4_1_5"/>
<dbReference type="PhylomeDB" id="Q8G092"/>
<dbReference type="UniPathway" id="UPA00588">
    <property type="reaction ID" value="UER00649"/>
</dbReference>
<dbReference type="Proteomes" id="UP000007104">
    <property type="component" value="Chromosome I"/>
</dbReference>
<dbReference type="GO" id="GO:0005737">
    <property type="term" value="C:cytoplasm"/>
    <property type="evidence" value="ECO:0007669"/>
    <property type="project" value="UniProtKB-SubCell"/>
</dbReference>
<dbReference type="GO" id="GO:0004017">
    <property type="term" value="F:adenylate kinase activity"/>
    <property type="evidence" value="ECO:0007669"/>
    <property type="project" value="UniProtKB-UniRule"/>
</dbReference>
<dbReference type="GO" id="GO:0005524">
    <property type="term" value="F:ATP binding"/>
    <property type="evidence" value="ECO:0007669"/>
    <property type="project" value="UniProtKB-UniRule"/>
</dbReference>
<dbReference type="GO" id="GO:0044209">
    <property type="term" value="P:AMP salvage"/>
    <property type="evidence" value="ECO:0007669"/>
    <property type="project" value="UniProtKB-UniRule"/>
</dbReference>
<dbReference type="CDD" id="cd01428">
    <property type="entry name" value="ADK"/>
    <property type="match status" value="1"/>
</dbReference>
<dbReference type="Gene3D" id="3.40.50.300">
    <property type="entry name" value="P-loop containing nucleotide triphosphate hydrolases"/>
    <property type="match status" value="1"/>
</dbReference>
<dbReference type="HAMAP" id="MF_00235">
    <property type="entry name" value="Adenylate_kinase_Adk"/>
    <property type="match status" value="1"/>
</dbReference>
<dbReference type="InterPro" id="IPR006259">
    <property type="entry name" value="Adenyl_kin_sub"/>
</dbReference>
<dbReference type="InterPro" id="IPR000850">
    <property type="entry name" value="Adenylat/UMP-CMP_kin"/>
</dbReference>
<dbReference type="InterPro" id="IPR033690">
    <property type="entry name" value="Adenylat_kinase_CS"/>
</dbReference>
<dbReference type="InterPro" id="IPR027417">
    <property type="entry name" value="P-loop_NTPase"/>
</dbReference>
<dbReference type="NCBIfam" id="TIGR01351">
    <property type="entry name" value="adk"/>
    <property type="match status" value="1"/>
</dbReference>
<dbReference type="NCBIfam" id="NF001381">
    <property type="entry name" value="PRK00279.1-3"/>
    <property type="match status" value="1"/>
</dbReference>
<dbReference type="NCBIfam" id="NF011100">
    <property type="entry name" value="PRK14527.1"/>
    <property type="match status" value="1"/>
</dbReference>
<dbReference type="NCBIfam" id="NF011101">
    <property type="entry name" value="PRK14528.1"/>
    <property type="match status" value="1"/>
</dbReference>
<dbReference type="NCBIfam" id="NF011104">
    <property type="entry name" value="PRK14531.1"/>
    <property type="match status" value="1"/>
</dbReference>
<dbReference type="NCBIfam" id="NF011105">
    <property type="entry name" value="PRK14532.1"/>
    <property type="match status" value="1"/>
</dbReference>
<dbReference type="PANTHER" id="PTHR23359">
    <property type="entry name" value="NUCLEOTIDE KINASE"/>
    <property type="match status" value="1"/>
</dbReference>
<dbReference type="Pfam" id="PF00406">
    <property type="entry name" value="ADK"/>
    <property type="match status" value="1"/>
</dbReference>
<dbReference type="PRINTS" id="PR00094">
    <property type="entry name" value="ADENYLTKNASE"/>
</dbReference>
<dbReference type="SUPFAM" id="SSF52540">
    <property type="entry name" value="P-loop containing nucleoside triphosphate hydrolases"/>
    <property type="match status" value="1"/>
</dbReference>
<dbReference type="PROSITE" id="PS00113">
    <property type="entry name" value="ADENYLATE_KINASE"/>
    <property type="match status" value="1"/>
</dbReference>
<proteinExistence type="inferred from homology"/>